<organism>
    <name type="scientific">Homo sapiens</name>
    <name type="common">Human</name>
    <dbReference type="NCBI Taxonomy" id="9606"/>
    <lineage>
        <taxon>Eukaryota</taxon>
        <taxon>Metazoa</taxon>
        <taxon>Chordata</taxon>
        <taxon>Craniata</taxon>
        <taxon>Vertebrata</taxon>
        <taxon>Euteleostomi</taxon>
        <taxon>Mammalia</taxon>
        <taxon>Eutheria</taxon>
        <taxon>Euarchontoglires</taxon>
        <taxon>Primates</taxon>
        <taxon>Haplorrhini</taxon>
        <taxon>Catarrhini</taxon>
        <taxon>Hominidae</taxon>
        <taxon>Homo</taxon>
    </lineage>
</organism>
<keyword id="KW-1003">Cell membrane</keyword>
<keyword id="KW-1015">Disulfide bond</keyword>
<keyword id="KW-0297">G-protein coupled receptor</keyword>
<keyword id="KW-0325">Glycoprotein</keyword>
<keyword id="KW-0472">Membrane</keyword>
<keyword id="KW-0675">Receptor</keyword>
<keyword id="KW-1185">Reference proteome</keyword>
<keyword id="KW-0807">Transducer</keyword>
<keyword id="KW-0812">Transmembrane</keyword>
<keyword id="KW-1133">Transmembrane helix</keyword>
<sequence length="375" mass="39818">MANASEPGGSGGGEAAALGLKLATLSLLLCVSLAGNVLFALLIVRERSLHRAPYYLLLDLCLADGLRALACLPAVMLAARRAAAAAGAPPGALGCKLLAFLAALFCFHAAFLLLGVGVTRYLAIAHHRFYAERLAGWPCAAMLVCAAWALALAAAFPPVLDGGGDDEDAPCALEQRPDGAPGALGFLLLLAVVVGATHLVYLRLLFFIHDRRKMRPARLVPAVSHDWTFHGPGATGQAAANWTAGFGRGPTPPALVGIRPAGPGRGARRLLVLEEFKTEKRLCKMFYAVTLLFLLLWGPYVVASYLRVLVRPGAVPQAYLTASVWLTFAQAGINPVVCFLFNRELRDCFRAQFPCCQSPRTTQATHPCDLKGIGL</sequence>
<evidence type="ECO:0000250" key="1"/>
<evidence type="ECO:0000255" key="2"/>
<evidence type="ECO:0000255" key="3">
    <source>
        <dbReference type="PROSITE-ProRule" id="PRU00521"/>
    </source>
</evidence>
<accession>Q9NS67</accession>
<name>GPR27_HUMAN</name>
<proteinExistence type="evidence at transcript level"/>
<protein>
    <recommendedName>
        <fullName>Probable G-protein coupled receptor 27</fullName>
    </recommendedName>
    <alternativeName>
        <fullName>Super conserved receptor expressed in brain 1</fullName>
    </alternativeName>
</protein>
<reference key="1">
    <citation type="journal article" date="2000" name="Biochem. Biophys. Res. Commun.">
        <title>An evolutionarily conserved G-protein coupled receptor family, SREB, expressed in the central nervous system.</title>
        <authorList>
            <person name="Matsumoto M."/>
            <person name="Saito T."/>
            <person name="Takasaki J."/>
            <person name="Kamohara M."/>
            <person name="Sugimoto T."/>
            <person name="Kobayashi M."/>
            <person name="Tadokoro M."/>
            <person name="Matsumoto S."/>
            <person name="Ohishi T."/>
            <person name="Furuichi K."/>
        </authorList>
    </citation>
    <scope>NUCLEOTIDE SEQUENCE [MRNA]</scope>
    <source>
        <tissue>Brain</tissue>
    </source>
</reference>
<feature type="chain" id="PRO_0000069548" description="Probable G-protein coupled receptor 27">
    <location>
        <begin position="1"/>
        <end position="375"/>
    </location>
</feature>
<feature type="topological domain" description="Extracellular" evidence="2">
    <location>
        <begin position="1"/>
        <end position="23"/>
    </location>
</feature>
<feature type="transmembrane region" description="Helical; Name=1" evidence="2">
    <location>
        <begin position="24"/>
        <end position="44"/>
    </location>
</feature>
<feature type="topological domain" description="Cytoplasmic" evidence="2">
    <location>
        <begin position="45"/>
        <end position="55"/>
    </location>
</feature>
<feature type="transmembrane region" description="Helical; Name=2" evidence="2">
    <location>
        <begin position="56"/>
        <end position="76"/>
    </location>
</feature>
<feature type="topological domain" description="Extracellular" evidence="2">
    <location>
        <begin position="77"/>
        <end position="97"/>
    </location>
</feature>
<feature type="transmembrane region" description="Helical; Name=3" evidence="2">
    <location>
        <begin position="98"/>
        <end position="118"/>
    </location>
</feature>
<feature type="topological domain" description="Cytoplasmic" evidence="2">
    <location>
        <begin position="119"/>
        <end position="139"/>
    </location>
</feature>
<feature type="transmembrane region" description="Helical; Name=4" evidence="2">
    <location>
        <begin position="140"/>
        <end position="160"/>
    </location>
</feature>
<feature type="topological domain" description="Extracellular" evidence="2">
    <location>
        <begin position="161"/>
        <end position="181"/>
    </location>
</feature>
<feature type="transmembrane region" description="Helical; Name=5" evidence="2">
    <location>
        <begin position="182"/>
        <end position="202"/>
    </location>
</feature>
<feature type="topological domain" description="Cytoplasmic" evidence="2">
    <location>
        <begin position="203"/>
        <end position="285"/>
    </location>
</feature>
<feature type="transmembrane region" description="Helical; Name=6" evidence="2">
    <location>
        <begin position="286"/>
        <end position="306"/>
    </location>
</feature>
<feature type="topological domain" description="Extracellular" evidence="2">
    <location>
        <begin position="307"/>
        <end position="320"/>
    </location>
</feature>
<feature type="transmembrane region" description="Helical; Name=7" evidence="2">
    <location>
        <begin position="321"/>
        <end position="341"/>
    </location>
</feature>
<feature type="topological domain" description="Cytoplasmic" evidence="2">
    <location>
        <begin position="342"/>
        <end position="375"/>
    </location>
</feature>
<feature type="glycosylation site" description="N-linked (GlcNAc...) asparagine" evidence="2">
    <location>
        <position position="3"/>
    </location>
</feature>
<feature type="disulfide bond" evidence="3">
    <location>
        <begin position="95"/>
        <end position="171"/>
    </location>
</feature>
<dbReference type="EMBL" id="AB040799">
    <property type="protein sequence ID" value="BAA96645.1"/>
    <property type="molecule type" value="mRNA"/>
</dbReference>
<dbReference type="CCDS" id="CCDS2915.1"/>
<dbReference type="PIR" id="JC7287">
    <property type="entry name" value="JC7287"/>
</dbReference>
<dbReference type="RefSeq" id="NP_061844.1">
    <property type="nucleotide sequence ID" value="NM_018971.3"/>
</dbReference>
<dbReference type="SMR" id="Q9NS67"/>
<dbReference type="BioGRID" id="109109">
    <property type="interactions" value="20"/>
</dbReference>
<dbReference type="FunCoup" id="Q9NS67">
    <property type="interactions" value="374"/>
</dbReference>
<dbReference type="IntAct" id="Q9NS67">
    <property type="interactions" value="5"/>
</dbReference>
<dbReference type="MINT" id="Q9NS67"/>
<dbReference type="STRING" id="9606.ENSP00000303149"/>
<dbReference type="BindingDB" id="Q9NS67"/>
<dbReference type="ChEMBL" id="CHEMBL4523923"/>
<dbReference type="GlyCosmos" id="Q9NS67">
    <property type="glycosylation" value="1 site, No reported glycans"/>
</dbReference>
<dbReference type="GlyGen" id="Q9NS67">
    <property type="glycosylation" value="2 sites"/>
</dbReference>
<dbReference type="PhosphoSitePlus" id="Q9NS67"/>
<dbReference type="BioMuta" id="GPR27"/>
<dbReference type="DMDM" id="15214047"/>
<dbReference type="jPOST" id="Q9NS67"/>
<dbReference type="MassIVE" id="Q9NS67"/>
<dbReference type="PaxDb" id="9606-ENSP00000303149"/>
<dbReference type="PeptideAtlas" id="Q9NS67"/>
<dbReference type="Antibodypedia" id="15615">
    <property type="antibodies" value="278 antibodies from 28 providers"/>
</dbReference>
<dbReference type="DNASU" id="2850"/>
<dbReference type="Ensembl" id="ENST00000304411.3">
    <property type="protein sequence ID" value="ENSP00000303149.2"/>
    <property type="gene ID" value="ENSG00000170837.3"/>
</dbReference>
<dbReference type="GeneID" id="2850"/>
<dbReference type="KEGG" id="hsa:2850"/>
<dbReference type="MANE-Select" id="ENST00000304411.3">
    <property type="protein sequence ID" value="ENSP00000303149.2"/>
    <property type="RefSeq nucleotide sequence ID" value="NM_018971.3"/>
    <property type="RefSeq protein sequence ID" value="NP_061844.1"/>
</dbReference>
<dbReference type="UCSC" id="uc011bge.3">
    <property type="organism name" value="human"/>
</dbReference>
<dbReference type="AGR" id="HGNC:4482"/>
<dbReference type="CTD" id="2850"/>
<dbReference type="DisGeNET" id="2850"/>
<dbReference type="GeneCards" id="GPR27"/>
<dbReference type="HGNC" id="HGNC:4482">
    <property type="gene designation" value="GPR27"/>
</dbReference>
<dbReference type="HPA" id="ENSG00000170837">
    <property type="expression patterns" value="Tissue enhanced (brain)"/>
</dbReference>
<dbReference type="MIM" id="605187">
    <property type="type" value="gene"/>
</dbReference>
<dbReference type="neXtProt" id="NX_Q9NS67"/>
<dbReference type="OpenTargets" id="ENSG00000170837"/>
<dbReference type="PharmGKB" id="PA28870"/>
<dbReference type="VEuPathDB" id="HostDB:ENSG00000170837"/>
<dbReference type="eggNOG" id="KOG3656">
    <property type="taxonomic scope" value="Eukaryota"/>
</dbReference>
<dbReference type="GeneTree" id="ENSGT00890000139436"/>
<dbReference type="HOGENOM" id="CLU_055518_0_0_1"/>
<dbReference type="InParanoid" id="Q9NS67"/>
<dbReference type="OMA" id="CIFEHRH"/>
<dbReference type="OrthoDB" id="6129346at2759"/>
<dbReference type="PAN-GO" id="Q9NS67">
    <property type="GO annotations" value="2 GO annotations based on evolutionary models"/>
</dbReference>
<dbReference type="PhylomeDB" id="Q9NS67"/>
<dbReference type="TreeFam" id="TF331163"/>
<dbReference type="PathwayCommons" id="Q9NS67"/>
<dbReference type="Reactome" id="R-HSA-418555">
    <property type="pathway name" value="G alpha (s) signalling events"/>
</dbReference>
<dbReference type="SignaLink" id="Q9NS67"/>
<dbReference type="BioGRID-ORCS" id="2850">
    <property type="hits" value="7 hits in 1137 CRISPR screens"/>
</dbReference>
<dbReference type="GeneWiki" id="GPR27"/>
<dbReference type="GenomeRNAi" id="2850"/>
<dbReference type="Pharos" id="Q9NS67">
    <property type="development level" value="Tbio"/>
</dbReference>
<dbReference type="PRO" id="PR:Q9NS67"/>
<dbReference type="Proteomes" id="UP000005640">
    <property type="component" value="Chromosome 3"/>
</dbReference>
<dbReference type="RNAct" id="Q9NS67">
    <property type="molecule type" value="protein"/>
</dbReference>
<dbReference type="Bgee" id="ENSG00000170837">
    <property type="expression patterns" value="Expressed in medial globus pallidus and 179 other cell types or tissues"/>
</dbReference>
<dbReference type="ExpressionAtlas" id="Q9NS67">
    <property type="expression patterns" value="baseline and differential"/>
</dbReference>
<dbReference type="GO" id="GO:0005886">
    <property type="term" value="C:plasma membrane"/>
    <property type="evidence" value="ECO:0000318"/>
    <property type="project" value="GO_Central"/>
</dbReference>
<dbReference type="GO" id="GO:0004930">
    <property type="term" value="F:G protein-coupled receptor activity"/>
    <property type="evidence" value="ECO:0000318"/>
    <property type="project" value="GO_Central"/>
</dbReference>
<dbReference type="GO" id="GO:0035774">
    <property type="term" value="P:positive regulation of insulin secretion involved in cellular response to glucose stimulus"/>
    <property type="evidence" value="ECO:0007669"/>
    <property type="project" value="Ensembl"/>
</dbReference>
<dbReference type="GO" id="GO:1900738">
    <property type="term" value="P:positive regulation of phospholipase C-activating G protein-coupled receptor signaling pathway"/>
    <property type="evidence" value="ECO:0007669"/>
    <property type="project" value="Ensembl"/>
</dbReference>
<dbReference type="GO" id="GO:0007165">
    <property type="term" value="P:signal transduction"/>
    <property type="evidence" value="ECO:0000304"/>
    <property type="project" value="ProtInc"/>
</dbReference>
<dbReference type="CDD" id="cd15216">
    <property type="entry name" value="7tmA_SREB1_GPR27"/>
    <property type="match status" value="1"/>
</dbReference>
<dbReference type="FunFam" id="1.20.1070.10:FF:000074">
    <property type="entry name" value="probable G-protein coupled receptor 173"/>
    <property type="match status" value="1"/>
</dbReference>
<dbReference type="Gene3D" id="1.20.1070.10">
    <property type="entry name" value="Rhodopsin 7-helix transmembrane proteins"/>
    <property type="match status" value="1"/>
</dbReference>
<dbReference type="InterPro" id="IPR051509">
    <property type="entry name" value="GPCR_Orphan/Phoenixin"/>
</dbReference>
<dbReference type="InterPro" id="IPR000276">
    <property type="entry name" value="GPCR_Rhodpsn"/>
</dbReference>
<dbReference type="InterPro" id="IPR017452">
    <property type="entry name" value="GPCR_Rhodpsn_7TM"/>
</dbReference>
<dbReference type="PANTHER" id="PTHR19268">
    <property type="entry name" value="G PROTEIN-COUPLED RECEPTOR"/>
    <property type="match status" value="1"/>
</dbReference>
<dbReference type="PANTHER" id="PTHR19268:SF8">
    <property type="entry name" value="G-PROTEIN COUPLED RECEPTOR 27-RELATED"/>
    <property type="match status" value="1"/>
</dbReference>
<dbReference type="Pfam" id="PF00001">
    <property type="entry name" value="7tm_1"/>
    <property type="match status" value="1"/>
</dbReference>
<dbReference type="PRINTS" id="PR00237">
    <property type="entry name" value="GPCRRHODOPSN"/>
</dbReference>
<dbReference type="SUPFAM" id="SSF81321">
    <property type="entry name" value="Family A G protein-coupled receptor-like"/>
    <property type="match status" value="1"/>
</dbReference>
<dbReference type="PROSITE" id="PS50262">
    <property type="entry name" value="G_PROTEIN_RECEP_F1_2"/>
    <property type="match status" value="1"/>
</dbReference>
<gene>
    <name type="primary">GPR27</name>
    <name type="synonym">SREB1</name>
</gene>
<comment type="function">
    <text>Orphan receptor. Possible candidate for amine-like G-protein coupled receptor.</text>
</comment>
<comment type="subcellular location">
    <subcellularLocation>
        <location evidence="1">Cell membrane</location>
        <topology evidence="1">Multi-pass membrane protein</topology>
    </subcellularLocation>
</comment>
<comment type="tissue specificity">
    <text>Highly expressed as a 3.0 kb transcript in brain, ovary, testis, heart, prostate and peripheral Leukocytes. Lower levels in pancreas and small intestine. A 2.3 kb transcript was also found in peripheral Leukocytes. In brain regions, detected as a 3.0 kb transcript in all regions tested. Highest levels in the caudate nucleus, putamen, hippocampus and subthalamic nucleus. Lowest level in the cerebellum.</text>
</comment>
<comment type="similarity">
    <text evidence="3">Belongs to the G-protein coupled receptor 1 family.</text>
</comment>